<reference key="1">
    <citation type="journal article" date="2011" name="Stand. Genomic Sci.">
        <title>Complete genome sequence of Rhodospirillum rubrum type strain (S1).</title>
        <authorList>
            <person name="Munk A.C."/>
            <person name="Copeland A."/>
            <person name="Lucas S."/>
            <person name="Lapidus A."/>
            <person name="Del Rio T.G."/>
            <person name="Barry K."/>
            <person name="Detter J.C."/>
            <person name="Hammon N."/>
            <person name="Israni S."/>
            <person name="Pitluck S."/>
            <person name="Brettin T."/>
            <person name="Bruce D."/>
            <person name="Han C."/>
            <person name="Tapia R."/>
            <person name="Gilna P."/>
            <person name="Schmutz J."/>
            <person name="Larimer F."/>
            <person name="Land M."/>
            <person name="Kyrpides N.C."/>
            <person name="Mavromatis K."/>
            <person name="Richardson P."/>
            <person name="Rohde M."/>
            <person name="Goeker M."/>
            <person name="Klenk H.P."/>
            <person name="Zhang Y."/>
            <person name="Roberts G.P."/>
            <person name="Reslewic S."/>
            <person name="Schwartz D.C."/>
        </authorList>
    </citation>
    <scope>NUCLEOTIDE SEQUENCE [LARGE SCALE GENOMIC DNA]</scope>
    <source>
        <strain>ATCC 11170 / ATH 1.1.1 / DSM 467 / LMG 4362 / NCIMB 8255 / S1</strain>
    </source>
</reference>
<keyword id="KW-0028">Amino-acid biosynthesis</keyword>
<keyword id="KW-0170">Cobalt</keyword>
<keyword id="KW-0220">Diaminopimelate biosynthesis</keyword>
<keyword id="KW-0378">Hydrolase</keyword>
<keyword id="KW-0457">Lysine biosynthesis</keyword>
<keyword id="KW-0479">Metal-binding</keyword>
<keyword id="KW-1185">Reference proteome</keyword>
<keyword id="KW-0862">Zinc</keyword>
<accession>Q2RNM1</accession>
<organism>
    <name type="scientific">Rhodospirillum rubrum (strain ATCC 11170 / ATH 1.1.1 / DSM 467 / LMG 4362 / NCIMB 8255 / S1)</name>
    <dbReference type="NCBI Taxonomy" id="269796"/>
    <lineage>
        <taxon>Bacteria</taxon>
        <taxon>Pseudomonadati</taxon>
        <taxon>Pseudomonadota</taxon>
        <taxon>Alphaproteobacteria</taxon>
        <taxon>Rhodospirillales</taxon>
        <taxon>Rhodospirillaceae</taxon>
        <taxon>Rhodospirillum</taxon>
    </lineage>
</organism>
<comment type="function">
    <text evidence="1">Catalyzes the hydrolysis of N-succinyl-L,L-diaminopimelic acid (SDAP), forming succinate and LL-2,6-diaminopimelate (DAP), an intermediate involved in the bacterial biosynthesis of lysine and meso-diaminopimelic acid, an essential component of bacterial cell walls.</text>
</comment>
<comment type="catalytic activity">
    <reaction evidence="1">
        <text>N-succinyl-(2S,6S)-2,6-diaminopimelate + H2O = (2S,6S)-2,6-diaminopimelate + succinate</text>
        <dbReference type="Rhea" id="RHEA:22608"/>
        <dbReference type="ChEBI" id="CHEBI:15377"/>
        <dbReference type="ChEBI" id="CHEBI:30031"/>
        <dbReference type="ChEBI" id="CHEBI:57609"/>
        <dbReference type="ChEBI" id="CHEBI:58087"/>
        <dbReference type="EC" id="3.5.1.18"/>
    </reaction>
</comment>
<comment type="cofactor">
    <cofactor evidence="1">
        <name>Zn(2+)</name>
        <dbReference type="ChEBI" id="CHEBI:29105"/>
    </cofactor>
    <cofactor evidence="1">
        <name>Co(2+)</name>
        <dbReference type="ChEBI" id="CHEBI:48828"/>
    </cofactor>
    <text evidence="1">Binds 2 Zn(2+) or Co(2+) ions per subunit.</text>
</comment>
<comment type="pathway">
    <text evidence="1">Amino-acid biosynthesis; L-lysine biosynthesis via DAP pathway; LL-2,6-diaminopimelate from (S)-tetrahydrodipicolinate (succinylase route): step 3/3.</text>
</comment>
<comment type="subunit">
    <text evidence="1">Homodimer.</text>
</comment>
<comment type="similarity">
    <text evidence="1">Belongs to the peptidase M20A family. DapE subfamily.</text>
</comment>
<comment type="sequence caution" evidence="2">
    <conflict type="erroneous initiation">
        <sequence resource="EMBL-CDS" id="ABC24274"/>
    </conflict>
</comment>
<proteinExistence type="inferred from homology"/>
<name>DAPE_RHORT</name>
<protein>
    <recommendedName>
        <fullName evidence="1">Succinyl-diaminopimelate desuccinylase</fullName>
        <shortName evidence="1">SDAP desuccinylase</shortName>
        <ecNumber evidence="1">3.5.1.18</ecNumber>
    </recommendedName>
    <alternativeName>
        <fullName evidence="1">N-succinyl-LL-2,6-diaminoheptanedioate amidohydrolase</fullName>
    </alternativeName>
</protein>
<evidence type="ECO:0000255" key="1">
    <source>
        <dbReference type="HAMAP-Rule" id="MF_01690"/>
    </source>
</evidence>
<evidence type="ECO:0000305" key="2"/>
<sequence length="392" mass="40947">MADPLALARALVACPSVTPRDAGALDVLESALIALGFRCVRLPFGAEGGERVDNLYARRGGAGPCFGFAGHTDVVPAGDGWSRPPFGAEVVDGALVGRGAADMKGGIACFVAAVARLISGPDSTGSISRHDPTGSIALLITGDEEGPALHGTRKVLEWMEGAGERMDLCLVGEPTNPEGLGDMIKIGRRGSLTATVTLLGRAGHVAYPHLADNPLHRLSTLTGLLLAETLDDGTAHFQPSSLQLTSIDVGNPAANVIPAKATLRFNIRFNDRHSGESLSAWIRARCLAACDGDESGFSLVLEHSGDAFLTPPGPLSDLIATACQAVTGRRPELSTSGGTSDARFIRSHCPVAEFGLVGRTMHKPDERVAVADLEALSEIYRRVLVGFFEAPC</sequence>
<dbReference type="EC" id="3.5.1.18" evidence="1"/>
<dbReference type="EMBL" id="CP000230">
    <property type="protein sequence ID" value="ABC24274.1"/>
    <property type="status" value="ALT_INIT"/>
    <property type="molecule type" value="Genomic_DNA"/>
</dbReference>
<dbReference type="RefSeq" id="YP_428561.1">
    <property type="nucleotide sequence ID" value="NC_007643.1"/>
</dbReference>
<dbReference type="SMR" id="Q2RNM1"/>
<dbReference type="STRING" id="269796.Rru_A3480"/>
<dbReference type="EnsemblBacteria" id="ABC24274">
    <property type="protein sequence ID" value="ABC24274"/>
    <property type="gene ID" value="Rru_A3480"/>
</dbReference>
<dbReference type="KEGG" id="rru:Rru_A3480"/>
<dbReference type="PATRIC" id="fig|269796.9.peg.3596"/>
<dbReference type="eggNOG" id="COG0624">
    <property type="taxonomic scope" value="Bacteria"/>
</dbReference>
<dbReference type="HOGENOM" id="CLU_021802_4_0_5"/>
<dbReference type="UniPathway" id="UPA00034">
    <property type="reaction ID" value="UER00021"/>
</dbReference>
<dbReference type="Proteomes" id="UP000001929">
    <property type="component" value="Chromosome"/>
</dbReference>
<dbReference type="GO" id="GO:0008777">
    <property type="term" value="F:acetylornithine deacetylase activity"/>
    <property type="evidence" value="ECO:0007669"/>
    <property type="project" value="TreeGrafter"/>
</dbReference>
<dbReference type="GO" id="GO:0050897">
    <property type="term" value="F:cobalt ion binding"/>
    <property type="evidence" value="ECO:0007669"/>
    <property type="project" value="UniProtKB-UniRule"/>
</dbReference>
<dbReference type="GO" id="GO:0009014">
    <property type="term" value="F:succinyl-diaminopimelate desuccinylase activity"/>
    <property type="evidence" value="ECO:0007669"/>
    <property type="project" value="UniProtKB-UniRule"/>
</dbReference>
<dbReference type="GO" id="GO:0008270">
    <property type="term" value="F:zinc ion binding"/>
    <property type="evidence" value="ECO:0007669"/>
    <property type="project" value="UniProtKB-UniRule"/>
</dbReference>
<dbReference type="GO" id="GO:0019877">
    <property type="term" value="P:diaminopimelate biosynthetic process"/>
    <property type="evidence" value="ECO:0007669"/>
    <property type="project" value="UniProtKB-UniRule"/>
</dbReference>
<dbReference type="GO" id="GO:0006526">
    <property type="term" value="P:L-arginine biosynthetic process"/>
    <property type="evidence" value="ECO:0007669"/>
    <property type="project" value="TreeGrafter"/>
</dbReference>
<dbReference type="GO" id="GO:0009089">
    <property type="term" value="P:lysine biosynthetic process via diaminopimelate"/>
    <property type="evidence" value="ECO:0007669"/>
    <property type="project" value="UniProtKB-UniRule"/>
</dbReference>
<dbReference type="CDD" id="cd03891">
    <property type="entry name" value="M20_DapE_proteobac"/>
    <property type="match status" value="1"/>
</dbReference>
<dbReference type="Gene3D" id="3.40.630.10">
    <property type="entry name" value="Zn peptidases"/>
    <property type="match status" value="2"/>
</dbReference>
<dbReference type="HAMAP" id="MF_01690">
    <property type="entry name" value="DapE"/>
    <property type="match status" value="1"/>
</dbReference>
<dbReference type="InterPro" id="IPR036264">
    <property type="entry name" value="Bact_exopeptidase_dim_dom"/>
</dbReference>
<dbReference type="InterPro" id="IPR005941">
    <property type="entry name" value="DapE_proteobac"/>
</dbReference>
<dbReference type="InterPro" id="IPR002933">
    <property type="entry name" value="Peptidase_M20"/>
</dbReference>
<dbReference type="InterPro" id="IPR011650">
    <property type="entry name" value="Peptidase_M20_dimer"/>
</dbReference>
<dbReference type="InterPro" id="IPR050072">
    <property type="entry name" value="Peptidase_M20A"/>
</dbReference>
<dbReference type="NCBIfam" id="TIGR01246">
    <property type="entry name" value="dapE_proteo"/>
    <property type="match status" value="1"/>
</dbReference>
<dbReference type="NCBIfam" id="NF009557">
    <property type="entry name" value="PRK13009.1"/>
    <property type="match status" value="1"/>
</dbReference>
<dbReference type="PANTHER" id="PTHR43808">
    <property type="entry name" value="ACETYLORNITHINE DEACETYLASE"/>
    <property type="match status" value="1"/>
</dbReference>
<dbReference type="PANTHER" id="PTHR43808:SF31">
    <property type="entry name" value="N-ACETYL-L-CITRULLINE DEACETYLASE"/>
    <property type="match status" value="1"/>
</dbReference>
<dbReference type="Pfam" id="PF07687">
    <property type="entry name" value="M20_dimer"/>
    <property type="match status" value="1"/>
</dbReference>
<dbReference type="Pfam" id="PF01546">
    <property type="entry name" value="Peptidase_M20"/>
    <property type="match status" value="1"/>
</dbReference>
<dbReference type="SUPFAM" id="SSF55031">
    <property type="entry name" value="Bacterial exopeptidase dimerisation domain"/>
    <property type="match status" value="1"/>
</dbReference>
<dbReference type="SUPFAM" id="SSF53187">
    <property type="entry name" value="Zn-dependent exopeptidases"/>
    <property type="match status" value="1"/>
</dbReference>
<feature type="chain" id="PRO_0000375696" description="Succinyl-diaminopimelate desuccinylase">
    <location>
        <begin position="1"/>
        <end position="392"/>
    </location>
</feature>
<feature type="active site" evidence="1">
    <location>
        <position position="73"/>
    </location>
</feature>
<feature type="active site" description="Proton acceptor" evidence="1">
    <location>
        <position position="144"/>
    </location>
</feature>
<feature type="binding site" evidence="1">
    <location>
        <position position="71"/>
    </location>
    <ligand>
        <name>Zn(2+)</name>
        <dbReference type="ChEBI" id="CHEBI:29105"/>
        <label>1</label>
    </ligand>
</feature>
<feature type="binding site" evidence="1">
    <location>
        <position position="102"/>
    </location>
    <ligand>
        <name>Zn(2+)</name>
        <dbReference type="ChEBI" id="CHEBI:29105"/>
        <label>1</label>
    </ligand>
</feature>
<feature type="binding site" evidence="1">
    <location>
        <position position="102"/>
    </location>
    <ligand>
        <name>Zn(2+)</name>
        <dbReference type="ChEBI" id="CHEBI:29105"/>
        <label>2</label>
    </ligand>
</feature>
<feature type="binding site" evidence="1">
    <location>
        <position position="145"/>
    </location>
    <ligand>
        <name>Zn(2+)</name>
        <dbReference type="ChEBI" id="CHEBI:29105"/>
        <label>2</label>
    </ligand>
</feature>
<feature type="binding site" evidence="1">
    <location>
        <position position="173"/>
    </location>
    <ligand>
        <name>Zn(2+)</name>
        <dbReference type="ChEBI" id="CHEBI:29105"/>
        <label>1</label>
    </ligand>
</feature>
<feature type="binding site" evidence="1">
    <location>
        <position position="362"/>
    </location>
    <ligand>
        <name>Zn(2+)</name>
        <dbReference type="ChEBI" id="CHEBI:29105"/>
        <label>2</label>
    </ligand>
</feature>
<gene>
    <name evidence="1" type="primary">dapE</name>
    <name type="ordered locus">Rru_A3480</name>
</gene>